<accession>Q632P8</accession>
<evidence type="ECO:0000255" key="1">
    <source>
        <dbReference type="HAMAP-Rule" id="MF_00091"/>
    </source>
</evidence>
<proteinExistence type="inferred from homology"/>
<sequence length="157" mass="17856">MPSVESFELDHTIVKAPYVRHCGVHNVGSDGIVNKFDIRFCQPNKQAMKPDVIHTLEHLLAFNLRKYIDRYPHFDIIDISPMGCQTGYYLVVSGTPTVREIIDLLELTLKDAVQITEIPAANETQCGQAKLHDLEGAKRLMNFWLSQDKDELEKVFG</sequence>
<organism>
    <name type="scientific">Bacillus cereus (strain ZK / E33L)</name>
    <dbReference type="NCBI Taxonomy" id="288681"/>
    <lineage>
        <taxon>Bacteria</taxon>
        <taxon>Bacillati</taxon>
        <taxon>Bacillota</taxon>
        <taxon>Bacilli</taxon>
        <taxon>Bacillales</taxon>
        <taxon>Bacillaceae</taxon>
        <taxon>Bacillus</taxon>
        <taxon>Bacillus cereus group</taxon>
    </lineage>
</organism>
<protein>
    <recommendedName>
        <fullName evidence="1">S-ribosylhomocysteine lyase</fullName>
        <ecNumber evidence="1">4.4.1.21</ecNumber>
    </recommendedName>
    <alternativeName>
        <fullName evidence="1">AI-2 synthesis protein</fullName>
    </alternativeName>
    <alternativeName>
        <fullName evidence="1">Autoinducer-2 production protein LuxS</fullName>
    </alternativeName>
</protein>
<reference key="1">
    <citation type="journal article" date="2006" name="J. Bacteriol.">
        <title>Pathogenomic sequence analysis of Bacillus cereus and Bacillus thuringiensis isolates closely related to Bacillus anthracis.</title>
        <authorList>
            <person name="Han C.S."/>
            <person name="Xie G."/>
            <person name="Challacombe J.F."/>
            <person name="Altherr M.R."/>
            <person name="Bhotika S.S."/>
            <person name="Bruce D."/>
            <person name="Campbell C.S."/>
            <person name="Campbell M.L."/>
            <person name="Chen J."/>
            <person name="Chertkov O."/>
            <person name="Cleland C."/>
            <person name="Dimitrijevic M."/>
            <person name="Doggett N.A."/>
            <person name="Fawcett J.J."/>
            <person name="Glavina T."/>
            <person name="Goodwin L.A."/>
            <person name="Hill K.K."/>
            <person name="Hitchcock P."/>
            <person name="Jackson P.J."/>
            <person name="Keim P."/>
            <person name="Kewalramani A.R."/>
            <person name="Longmire J."/>
            <person name="Lucas S."/>
            <person name="Malfatti S."/>
            <person name="McMurry K."/>
            <person name="Meincke L.J."/>
            <person name="Misra M."/>
            <person name="Moseman B.L."/>
            <person name="Mundt M."/>
            <person name="Munk A.C."/>
            <person name="Okinaka R.T."/>
            <person name="Parson-Quintana B."/>
            <person name="Reilly L.P."/>
            <person name="Richardson P."/>
            <person name="Robinson D.L."/>
            <person name="Rubin E."/>
            <person name="Saunders E."/>
            <person name="Tapia R."/>
            <person name="Tesmer J.G."/>
            <person name="Thayer N."/>
            <person name="Thompson L.S."/>
            <person name="Tice H."/>
            <person name="Ticknor L.O."/>
            <person name="Wills P.L."/>
            <person name="Brettin T.S."/>
            <person name="Gilna P."/>
        </authorList>
    </citation>
    <scope>NUCLEOTIDE SEQUENCE [LARGE SCALE GENOMIC DNA]</scope>
    <source>
        <strain>ZK / E33L</strain>
    </source>
</reference>
<feature type="chain" id="PRO_0000172207" description="S-ribosylhomocysteine lyase">
    <location>
        <begin position="1"/>
        <end position="157"/>
    </location>
</feature>
<feature type="binding site" evidence="1">
    <location>
        <position position="54"/>
    </location>
    <ligand>
        <name>Fe cation</name>
        <dbReference type="ChEBI" id="CHEBI:24875"/>
    </ligand>
</feature>
<feature type="binding site" evidence="1">
    <location>
        <position position="58"/>
    </location>
    <ligand>
        <name>Fe cation</name>
        <dbReference type="ChEBI" id="CHEBI:24875"/>
    </ligand>
</feature>
<feature type="binding site" evidence="1">
    <location>
        <position position="126"/>
    </location>
    <ligand>
        <name>Fe cation</name>
        <dbReference type="ChEBI" id="CHEBI:24875"/>
    </ligand>
</feature>
<name>LUXS_BACCZ</name>
<gene>
    <name evidence="1" type="primary">luxS</name>
    <name type="ordered locus">BCE33L4544</name>
</gene>
<comment type="function">
    <text evidence="1">Involved in the synthesis of autoinducer 2 (AI-2) which is secreted by bacteria and is used to communicate both the cell density and the metabolic potential of the environment. The regulation of gene expression in response to changes in cell density is called quorum sensing. Catalyzes the transformation of S-ribosylhomocysteine (RHC) to homocysteine (HC) and 4,5-dihydroxy-2,3-pentadione (DPD).</text>
</comment>
<comment type="catalytic activity">
    <reaction evidence="1">
        <text>S-(5-deoxy-D-ribos-5-yl)-L-homocysteine = (S)-4,5-dihydroxypentane-2,3-dione + L-homocysteine</text>
        <dbReference type="Rhea" id="RHEA:17753"/>
        <dbReference type="ChEBI" id="CHEBI:29484"/>
        <dbReference type="ChEBI" id="CHEBI:58195"/>
        <dbReference type="ChEBI" id="CHEBI:58199"/>
        <dbReference type="EC" id="4.4.1.21"/>
    </reaction>
</comment>
<comment type="cofactor">
    <cofactor evidence="1">
        <name>Fe cation</name>
        <dbReference type="ChEBI" id="CHEBI:24875"/>
    </cofactor>
    <text evidence="1">Binds 1 Fe cation per subunit.</text>
</comment>
<comment type="subunit">
    <text evidence="1">Homodimer.</text>
</comment>
<comment type="similarity">
    <text evidence="1">Belongs to the LuxS family.</text>
</comment>
<dbReference type="EC" id="4.4.1.21" evidence="1"/>
<dbReference type="EMBL" id="CP000001">
    <property type="protein sequence ID" value="AAU15729.1"/>
    <property type="molecule type" value="Genomic_DNA"/>
</dbReference>
<dbReference type="RefSeq" id="WP_001141369.1">
    <property type="nucleotide sequence ID" value="NZ_CP009968.1"/>
</dbReference>
<dbReference type="SMR" id="Q632P8"/>
<dbReference type="GeneID" id="93006297"/>
<dbReference type="KEGG" id="bcz:BCE33L4544"/>
<dbReference type="PATRIC" id="fig|288681.22.peg.819"/>
<dbReference type="Proteomes" id="UP000002612">
    <property type="component" value="Chromosome"/>
</dbReference>
<dbReference type="GO" id="GO:0005506">
    <property type="term" value="F:iron ion binding"/>
    <property type="evidence" value="ECO:0007669"/>
    <property type="project" value="InterPro"/>
</dbReference>
<dbReference type="GO" id="GO:0043768">
    <property type="term" value="F:S-ribosylhomocysteine lyase activity"/>
    <property type="evidence" value="ECO:0007669"/>
    <property type="project" value="UniProtKB-UniRule"/>
</dbReference>
<dbReference type="GO" id="GO:0009372">
    <property type="term" value="P:quorum sensing"/>
    <property type="evidence" value="ECO:0007669"/>
    <property type="project" value="UniProtKB-UniRule"/>
</dbReference>
<dbReference type="Gene3D" id="3.30.1360.80">
    <property type="entry name" value="S-ribosylhomocysteinase (LuxS)"/>
    <property type="match status" value="1"/>
</dbReference>
<dbReference type="HAMAP" id="MF_00091">
    <property type="entry name" value="LuxS"/>
    <property type="match status" value="1"/>
</dbReference>
<dbReference type="InterPro" id="IPR037005">
    <property type="entry name" value="LuxS_sf"/>
</dbReference>
<dbReference type="InterPro" id="IPR011249">
    <property type="entry name" value="Metalloenz_LuxS/M16"/>
</dbReference>
<dbReference type="InterPro" id="IPR003815">
    <property type="entry name" value="S-ribosylhomocysteinase"/>
</dbReference>
<dbReference type="NCBIfam" id="NF002603">
    <property type="entry name" value="PRK02260.1-3"/>
    <property type="match status" value="1"/>
</dbReference>
<dbReference type="PANTHER" id="PTHR35799">
    <property type="entry name" value="S-RIBOSYLHOMOCYSTEINE LYASE"/>
    <property type="match status" value="1"/>
</dbReference>
<dbReference type="PANTHER" id="PTHR35799:SF1">
    <property type="entry name" value="S-RIBOSYLHOMOCYSTEINE LYASE"/>
    <property type="match status" value="1"/>
</dbReference>
<dbReference type="Pfam" id="PF02664">
    <property type="entry name" value="LuxS"/>
    <property type="match status" value="1"/>
</dbReference>
<dbReference type="PIRSF" id="PIRSF006160">
    <property type="entry name" value="AI2"/>
    <property type="match status" value="1"/>
</dbReference>
<dbReference type="PRINTS" id="PR01487">
    <property type="entry name" value="LUXSPROTEIN"/>
</dbReference>
<dbReference type="SUPFAM" id="SSF63411">
    <property type="entry name" value="LuxS/MPP-like metallohydrolase"/>
    <property type="match status" value="1"/>
</dbReference>
<keyword id="KW-0071">Autoinducer synthesis</keyword>
<keyword id="KW-0408">Iron</keyword>
<keyword id="KW-0456">Lyase</keyword>
<keyword id="KW-0479">Metal-binding</keyword>
<keyword id="KW-0673">Quorum sensing</keyword>